<sequence>MALTSIFGGSSSSSGTPATSSPSDVKTQLKSQISQELAIANATELVNKVTENCFEKCLNAPYAASQDNCVDQCLAKYMRSWNAISKAYINRIQQASVNGEI</sequence>
<gene>
    <name type="primary">TIM13</name>
    <name type="ordered locus">KLLA0F15312g</name>
</gene>
<name>TIM13_KLULA</name>
<reference key="1">
    <citation type="journal article" date="2004" name="Nature">
        <title>Genome evolution in yeasts.</title>
        <authorList>
            <person name="Dujon B."/>
            <person name="Sherman D."/>
            <person name="Fischer G."/>
            <person name="Durrens P."/>
            <person name="Casaregola S."/>
            <person name="Lafontaine I."/>
            <person name="de Montigny J."/>
            <person name="Marck C."/>
            <person name="Neuveglise C."/>
            <person name="Talla E."/>
            <person name="Goffard N."/>
            <person name="Frangeul L."/>
            <person name="Aigle M."/>
            <person name="Anthouard V."/>
            <person name="Babour A."/>
            <person name="Barbe V."/>
            <person name="Barnay S."/>
            <person name="Blanchin S."/>
            <person name="Beckerich J.-M."/>
            <person name="Beyne E."/>
            <person name="Bleykasten C."/>
            <person name="Boisrame A."/>
            <person name="Boyer J."/>
            <person name="Cattolico L."/>
            <person name="Confanioleri F."/>
            <person name="de Daruvar A."/>
            <person name="Despons L."/>
            <person name="Fabre E."/>
            <person name="Fairhead C."/>
            <person name="Ferry-Dumazet H."/>
            <person name="Groppi A."/>
            <person name="Hantraye F."/>
            <person name="Hennequin C."/>
            <person name="Jauniaux N."/>
            <person name="Joyet P."/>
            <person name="Kachouri R."/>
            <person name="Kerrest A."/>
            <person name="Koszul R."/>
            <person name="Lemaire M."/>
            <person name="Lesur I."/>
            <person name="Ma L."/>
            <person name="Muller H."/>
            <person name="Nicaud J.-M."/>
            <person name="Nikolski M."/>
            <person name="Oztas S."/>
            <person name="Ozier-Kalogeropoulos O."/>
            <person name="Pellenz S."/>
            <person name="Potier S."/>
            <person name="Richard G.-F."/>
            <person name="Straub M.-L."/>
            <person name="Suleau A."/>
            <person name="Swennen D."/>
            <person name="Tekaia F."/>
            <person name="Wesolowski-Louvel M."/>
            <person name="Westhof E."/>
            <person name="Wirth B."/>
            <person name="Zeniou-Meyer M."/>
            <person name="Zivanovic Y."/>
            <person name="Bolotin-Fukuhara M."/>
            <person name="Thierry A."/>
            <person name="Bouchier C."/>
            <person name="Caudron B."/>
            <person name="Scarpelli C."/>
            <person name="Gaillardin C."/>
            <person name="Weissenbach J."/>
            <person name="Wincker P."/>
            <person name="Souciet J.-L."/>
        </authorList>
    </citation>
    <scope>NUCLEOTIDE SEQUENCE [LARGE SCALE GENOMIC DNA]</scope>
    <source>
        <strain>ATCC 8585 / CBS 2359 / DSM 70799 / NBRC 1267 / NRRL Y-1140 / WM37</strain>
    </source>
</reference>
<proteinExistence type="inferred from homology"/>
<accession>Q6CJX3</accession>
<organism>
    <name type="scientific">Kluyveromyces lactis (strain ATCC 8585 / CBS 2359 / DSM 70799 / NBRC 1267 / NRRL Y-1140 / WM37)</name>
    <name type="common">Yeast</name>
    <name type="synonym">Candida sphaerica</name>
    <dbReference type="NCBI Taxonomy" id="284590"/>
    <lineage>
        <taxon>Eukaryota</taxon>
        <taxon>Fungi</taxon>
        <taxon>Dikarya</taxon>
        <taxon>Ascomycota</taxon>
        <taxon>Saccharomycotina</taxon>
        <taxon>Saccharomycetes</taxon>
        <taxon>Saccharomycetales</taxon>
        <taxon>Saccharomycetaceae</taxon>
        <taxon>Kluyveromyces</taxon>
    </lineage>
</organism>
<comment type="function">
    <text evidence="1">Mitochondrial intermembrane chaperone that participates in the import and insertion of some multi-pass transmembrane proteins into the mitochondrial inner membrane. Also required for the transfer of beta-barrel precursors from the TOM complex to the sorting and assembly machinery (SAM complex) of the outer membrane. Acts as a chaperone-like protein that protects the hydrophobic precursors from aggregation and guide them through the mitochondrial intermembrane space. The TIM8-TIM13 complex is non essential and only mediates the import of few proteins, while the predominant TIM9-TIM10 70 kDa complex is crucial and mediates the import of much more proteins (By similarity).</text>
</comment>
<comment type="subunit">
    <text evidence="1">Heterohexamer; composed of 3 copies of TIM8 and 3 copies of TIM13, named soluble 70 kDa complex. Associates with the TIM22 complex, whose core is composed of TIM22 and TIM54. Interacts with the transmembrane regions of multi-pass transmembrane proteins in transit (By similarity).</text>
</comment>
<comment type="subcellular location">
    <subcellularLocation>
        <location evidence="1">Mitochondrion inner membrane</location>
        <topology evidence="1">Peripheral membrane protein</topology>
        <orientation evidence="1">Intermembrane side</orientation>
    </subcellularLocation>
</comment>
<comment type="domain">
    <text evidence="1">The twin CX3C motif contains 4 conserved Cys residues that form 2 disulfide bonds in the mitochondrial intermembrane space. However, during the transit of TIM13 from cytoplasm into mitochondrion, the Cys residues probably coordinate zinc, thereby preventing folding and allowing its transfer across mitochondrial outer membrane (By similarity).</text>
</comment>
<comment type="similarity">
    <text evidence="3">Belongs to the small Tim family.</text>
</comment>
<keyword id="KW-0143">Chaperone</keyword>
<keyword id="KW-1015">Disulfide bond</keyword>
<keyword id="KW-0472">Membrane</keyword>
<keyword id="KW-0479">Metal-binding</keyword>
<keyword id="KW-0496">Mitochondrion</keyword>
<keyword id="KW-0999">Mitochondrion inner membrane</keyword>
<keyword id="KW-0653">Protein transport</keyword>
<keyword id="KW-1185">Reference proteome</keyword>
<keyword id="KW-0811">Translocation</keyword>
<keyword id="KW-0813">Transport</keyword>
<keyword id="KW-0862">Zinc</keyword>
<evidence type="ECO:0000250" key="1"/>
<evidence type="ECO:0000256" key="2">
    <source>
        <dbReference type="SAM" id="MobiDB-lite"/>
    </source>
</evidence>
<evidence type="ECO:0000305" key="3"/>
<protein>
    <recommendedName>
        <fullName>Mitochondrial import inner membrane translocase subunit TIM13</fullName>
    </recommendedName>
</protein>
<feature type="chain" id="PRO_0000228077" description="Mitochondrial import inner membrane translocase subunit TIM13">
    <location>
        <begin position="1"/>
        <end position="101"/>
    </location>
</feature>
<feature type="region of interest" description="Disordered" evidence="2">
    <location>
        <begin position="1"/>
        <end position="27"/>
    </location>
</feature>
<feature type="short sequence motif" description="Twin CX3C motif">
    <location>
        <begin position="53"/>
        <end position="73"/>
    </location>
</feature>
<feature type="compositionally biased region" description="Low complexity" evidence="2">
    <location>
        <begin position="1"/>
        <end position="23"/>
    </location>
</feature>
<feature type="disulfide bond" evidence="1">
    <location>
        <begin position="53"/>
        <end position="73"/>
    </location>
</feature>
<feature type="disulfide bond" evidence="1">
    <location>
        <begin position="57"/>
        <end position="69"/>
    </location>
</feature>
<dbReference type="EMBL" id="CR382126">
    <property type="protein sequence ID" value="CAG98474.1"/>
    <property type="molecule type" value="Genomic_DNA"/>
</dbReference>
<dbReference type="RefSeq" id="XP_455766.1">
    <property type="nucleotide sequence ID" value="XM_455766.1"/>
</dbReference>
<dbReference type="SMR" id="Q6CJX3"/>
<dbReference type="FunCoup" id="Q6CJX3">
    <property type="interactions" value="464"/>
</dbReference>
<dbReference type="STRING" id="284590.Q6CJX3"/>
<dbReference type="PaxDb" id="284590-Q6CJX3"/>
<dbReference type="KEGG" id="kla:KLLA0_F15312g"/>
<dbReference type="eggNOG" id="KOG1733">
    <property type="taxonomic scope" value="Eukaryota"/>
</dbReference>
<dbReference type="HOGENOM" id="CLU_141397_0_1_1"/>
<dbReference type="InParanoid" id="Q6CJX3"/>
<dbReference type="OMA" id="MAAWNQV"/>
<dbReference type="Proteomes" id="UP000000598">
    <property type="component" value="Chromosome F"/>
</dbReference>
<dbReference type="GO" id="GO:0005743">
    <property type="term" value="C:mitochondrial inner membrane"/>
    <property type="evidence" value="ECO:0007669"/>
    <property type="project" value="UniProtKB-SubCell"/>
</dbReference>
<dbReference type="GO" id="GO:0046872">
    <property type="term" value="F:metal ion binding"/>
    <property type="evidence" value="ECO:0007669"/>
    <property type="project" value="UniProtKB-KW"/>
</dbReference>
<dbReference type="GO" id="GO:0015031">
    <property type="term" value="P:protein transport"/>
    <property type="evidence" value="ECO:0007669"/>
    <property type="project" value="UniProtKB-KW"/>
</dbReference>
<dbReference type="FunFam" id="1.10.287.810:FF:000001">
    <property type="entry name" value="mitochondrial import inner membrane translocase subunit TIM13"/>
    <property type="match status" value="1"/>
</dbReference>
<dbReference type="Gene3D" id="1.10.287.810">
    <property type="entry name" value="Mitochondrial import inner membrane translocase subunit tim13 like domains"/>
    <property type="match status" value="1"/>
</dbReference>
<dbReference type="InterPro" id="IPR004217">
    <property type="entry name" value="Tim10-like"/>
</dbReference>
<dbReference type="InterPro" id="IPR035427">
    <property type="entry name" value="Tim10-like_dom_sf"/>
</dbReference>
<dbReference type="Pfam" id="PF02953">
    <property type="entry name" value="zf-Tim10_DDP"/>
    <property type="match status" value="1"/>
</dbReference>
<dbReference type="SUPFAM" id="SSF144122">
    <property type="entry name" value="Tim10-like"/>
    <property type="match status" value="1"/>
</dbReference>